<keyword id="KW-0067">ATP-binding</keyword>
<keyword id="KW-0997">Cell inner membrane</keyword>
<keyword id="KW-1003">Cell membrane</keyword>
<keyword id="KW-0406">Ion transport</keyword>
<keyword id="KW-0472">Membrane</keyword>
<keyword id="KW-0547">Nucleotide-binding</keyword>
<keyword id="KW-0630">Potassium</keyword>
<keyword id="KW-0633">Potassium transport</keyword>
<keyword id="KW-1185">Reference proteome</keyword>
<keyword id="KW-0812">Transmembrane</keyword>
<keyword id="KW-1133">Transmembrane helix</keyword>
<keyword id="KW-0813">Transport</keyword>
<accession>A2SIS1</accession>
<comment type="function">
    <text evidence="1">Part of the high-affinity ATP-driven potassium transport (or Kdp) system, which catalyzes the hydrolysis of ATP coupled with the electrogenic transport of potassium into the cytoplasm. This subunit acts as a catalytic chaperone that increases the ATP-binding affinity of the ATP-hydrolyzing subunit KdpB by the formation of a transient KdpB/KdpC/ATP ternary complex.</text>
</comment>
<comment type="subunit">
    <text evidence="1">The system is composed of three essential subunits: KdpA, KdpB and KdpC.</text>
</comment>
<comment type="subcellular location">
    <subcellularLocation>
        <location evidence="1">Cell inner membrane</location>
        <topology evidence="1">Single-pass membrane protein</topology>
    </subcellularLocation>
</comment>
<comment type="similarity">
    <text evidence="1">Belongs to the KdpC family.</text>
</comment>
<feature type="chain" id="PRO_1000022294" description="Potassium-transporting ATPase KdpC subunit">
    <location>
        <begin position="1"/>
        <end position="191"/>
    </location>
</feature>
<feature type="transmembrane region" description="Helical" evidence="1">
    <location>
        <begin position="7"/>
        <end position="27"/>
    </location>
</feature>
<proteinExistence type="inferred from homology"/>
<gene>
    <name evidence="1" type="primary">kdpC</name>
    <name type="ordered locus">Mpe_A2505</name>
</gene>
<organism>
    <name type="scientific">Methylibium petroleiphilum (strain ATCC BAA-1232 / LMG 22953 / PM1)</name>
    <dbReference type="NCBI Taxonomy" id="420662"/>
    <lineage>
        <taxon>Bacteria</taxon>
        <taxon>Pseudomonadati</taxon>
        <taxon>Pseudomonadota</taxon>
        <taxon>Betaproteobacteria</taxon>
        <taxon>Burkholderiales</taxon>
        <taxon>Sphaerotilaceae</taxon>
        <taxon>Methylibium</taxon>
    </lineage>
</organism>
<reference key="1">
    <citation type="journal article" date="2007" name="J. Bacteriol.">
        <title>Whole-genome analysis of the methyl tert-butyl ether-degrading beta-proteobacterium Methylibium petroleiphilum PM1.</title>
        <authorList>
            <person name="Kane S.R."/>
            <person name="Chakicherla A.Y."/>
            <person name="Chain P.S.G."/>
            <person name="Schmidt R."/>
            <person name="Shin M.W."/>
            <person name="Legler T.C."/>
            <person name="Scow K.M."/>
            <person name="Larimer F.W."/>
            <person name="Lucas S.M."/>
            <person name="Richardson P.M."/>
            <person name="Hristova K.R."/>
        </authorList>
    </citation>
    <scope>NUCLEOTIDE SEQUENCE [LARGE SCALE GENOMIC DNA]</scope>
    <source>
        <strain>ATCC BAA-1232 / LMG 22953 / PM1</strain>
    </source>
</reference>
<name>KDPC_METPP</name>
<dbReference type="EMBL" id="CP000555">
    <property type="protein sequence ID" value="ABM95460.1"/>
    <property type="molecule type" value="Genomic_DNA"/>
</dbReference>
<dbReference type="RefSeq" id="WP_011830093.1">
    <property type="nucleotide sequence ID" value="NC_008825.1"/>
</dbReference>
<dbReference type="SMR" id="A2SIS1"/>
<dbReference type="STRING" id="420662.Mpe_A2505"/>
<dbReference type="KEGG" id="mpt:Mpe_A2505"/>
<dbReference type="eggNOG" id="COG2156">
    <property type="taxonomic scope" value="Bacteria"/>
</dbReference>
<dbReference type="HOGENOM" id="CLU_077094_2_0_4"/>
<dbReference type="Proteomes" id="UP000000366">
    <property type="component" value="Chromosome"/>
</dbReference>
<dbReference type="GO" id="GO:0005886">
    <property type="term" value="C:plasma membrane"/>
    <property type="evidence" value="ECO:0007669"/>
    <property type="project" value="UniProtKB-SubCell"/>
</dbReference>
<dbReference type="GO" id="GO:0005524">
    <property type="term" value="F:ATP binding"/>
    <property type="evidence" value="ECO:0007669"/>
    <property type="project" value="UniProtKB-UniRule"/>
</dbReference>
<dbReference type="GO" id="GO:0008556">
    <property type="term" value="F:P-type potassium transmembrane transporter activity"/>
    <property type="evidence" value="ECO:0007669"/>
    <property type="project" value="InterPro"/>
</dbReference>
<dbReference type="HAMAP" id="MF_00276">
    <property type="entry name" value="KdpC"/>
    <property type="match status" value="1"/>
</dbReference>
<dbReference type="InterPro" id="IPR003820">
    <property type="entry name" value="KdpC"/>
</dbReference>
<dbReference type="NCBIfam" id="TIGR00681">
    <property type="entry name" value="kdpC"/>
    <property type="match status" value="1"/>
</dbReference>
<dbReference type="NCBIfam" id="NF001454">
    <property type="entry name" value="PRK00315.1"/>
    <property type="match status" value="1"/>
</dbReference>
<dbReference type="PANTHER" id="PTHR30042">
    <property type="entry name" value="POTASSIUM-TRANSPORTING ATPASE C CHAIN"/>
    <property type="match status" value="1"/>
</dbReference>
<dbReference type="PANTHER" id="PTHR30042:SF2">
    <property type="entry name" value="POTASSIUM-TRANSPORTING ATPASE KDPC SUBUNIT"/>
    <property type="match status" value="1"/>
</dbReference>
<dbReference type="Pfam" id="PF02669">
    <property type="entry name" value="KdpC"/>
    <property type="match status" value="1"/>
</dbReference>
<dbReference type="PIRSF" id="PIRSF001296">
    <property type="entry name" value="K_ATPase_KdpC"/>
    <property type="match status" value="1"/>
</dbReference>
<sequence>MKTLLRASLVLFLSLTLLTGVAYPLLVTGLGQVLFPAQAAGSLLFRDGRPIGSSLIGQPFGAARYIWGRPSATAPTPNNAQASGGSNLGPSNPVLLQAVEARIAALRAADPGNTLPIPVDLVTASASGLDPEISLAGARYQAARVARARGLSEAEVLALIDQHARGRWFGFLGEPRVNVLALNLTLDGRRP</sequence>
<evidence type="ECO:0000255" key="1">
    <source>
        <dbReference type="HAMAP-Rule" id="MF_00276"/>
    </source>
</evidence>
<protein>
    <recommendedName>
        <fullName evidence="1">Potassium-transporting ATPase KdpC subunit</fullName>
    </recommendedName>
    <alternativeName>
        <fullName evidence="1">ATP phosphohydrolase [potassium-transporting] C chain</fullName>
    </alternativeName>
    <alternativeName>
        <fullName evidence="1">Potassium-binding and translocating subunit C</fullName>
    </alternativeName>
    <alternativeName>
        <fullName evidence="1">Potassium-translocating ATPase C chain</fullName>
    </alternativeName>
</protein>